<reference key="1">
    <citation type="journal article" date="2006" name="Proc. Natl. Acad. Sci. U.S.A.">
        <title>Burkholderia xenovorans LB400 harbors a multi-replicon, 9.73-Mbp genome shaped for versatility.</title>
        <authorList>
            <person name="Chain P.S.G."/>
            <person name="Denef V.J."/>
            <person name="Konstantinidis K.T."/>
            <person name="Vergez L.M."/>
            <person name="Agullo L."/>
            <person name="Reyes V.L."/>
            <person name="Hauser L."/>
            <person name="Cordova M."/>
            <person name="Gomez L."/>
            <person name="Gonzalez M."/>
            <person name="Land M."/>
            <person name="Lao V."/>
            <person name="Larimer F."/>
            <person name="LiPuma J.J."/>
            <person name="Mahenthiralingam E."/>
            <person name="Malfatti S.A."/>
            <person name="Marx C.J."/>
            <person name="Parnell J.J."/>
            <person name="Ramette A."/>
            <person name="Richardson P."/>
            <person name="Seeger M."/>
            <person name="Smith D."/>
            <person name="Spilker T."/>
            <person name="Sul W.J."/>
            <person name="Tsoi T.V."/>
            <person name="Ulrich L.E."/>
            <person name="Zhulin I.B."/>
            <person name="Tiedje J.M."/>
        </authorList>
    </citation>
    <scope>NUCLEOTIDE SEQUENCE [LARGE SCALE GENOMIC DNA]</scope>
    <source>
        <strain>LB400</strain>
    </source>
</reference>
<sequence length="243" mass="27150">MSKTHFGFQSVDEQDKAQKVAGVFHSVAANYDLMNDLMSGGLHRAWKMFTIAQANVRPGYKVLDIAGGTGDLSKAFAKQAGETGEVWHTDINESMLRVGRDRLLDKGVITPALLCDAEKIPFPDNYFDVVTVAFGLRNMTHKDIALAEMRRVLKPAGRLLVLEFSKVWDPLKKVYDVYSFKVLPWLGEHFAKDAGSYQYLAESIRMHPDQETLKTMMEQAGLDGVKYYNLSAGVVALHVGTKY</sequence>
<gene>
    <name evidence="1" type="primary">ubiE</name>
    <name type="ordered locus">Bxeno_A0411</name>
    <name type="ORF">Bxe_A4050</name>
</gene>
<name>UBIE_PARXL</name>
<accession>Q145P0</accession>
<organism>
    <name type="scientific">Paraburkholderia xenovorans (strain LB400)</name>
    <dbReference type="NCBI Taxonomy" id="266265"/>
    <lineage>
        <taxon>Bacteria</taxon>
        <taxon>Pseudomonadati</taxon>
        <taxon>Pseudomonadota</taxon>
        <taxon>Betaproteobacteria</taxon>
        <taxon>Burkholderiales</taxon>
        <taxon>Burkholderiaceae</taxon>
        <taxon>Paraburkholderia</taxon>
    </lineage>
</organism>
<dbReference type="EC" id="2.1.1.163" evidence="1"/>
<dbReference type="EC" id="2.1.1.201" evidence="1"/>
<dbReference type="EMBL" id="CP000270">
    <property type="protein sequence ID" value="ABE28949.1"/>
    <property type="molecule type" value="Genomic_DNA"/>
</dbReference>
<dbReference type="RefSeq" id="WP_011486775.1">
    <property type="nucleotide sequence ID" value="NC_007951.1"/>
</dbReference>
<dbReference type="SMR" id="Q145P0"/>
<dbReference type="STRING" id="266265.Bxe_A4050"/>
<dbReference type="KEGG" id="bxb:DR64_1727"/>
<dbReference type="KEGG" id="bxe:Bxe_A4050"/>
<dbReference type="PATRIC" id="fig|266265.5.peg.434"/>
<dbReference type="eggNOG" id="COG2226">
    <property type="taxonomic scope" value="Bacteria"/>
</dbReference>
<dbReference type="OrthoDB" id="9808140at2"/>
<dbReference type="UniPathway" id="UPA00079">
    <property type="reaction ID" value="UER00169"/>
</dbReference>
<dbReference type="UniPathway" id="UPA00232"/>
<dbReference type="Proteomes" id="UP000001817">
    <property type="component" value="Chromosome 1"/>
</dbReference>
<dbReference type="GO" id="GO:0008425">
    <property type="term" value="F:2-methoxy-6-polyprenyl-1,4-benzoquinol methyltransferase activity"/>
    <property type="evidence" value="ECO:0007669"/>
    <property type="project" value="UniProtKB-UniRule"/>
</dbReference>
<dbReference type="GO" id="GO:0043770">
    <property type="term" value="F:demethylmenaquinone methyltransferase activity"/>
    <property type="evidence" value="ECO:0007669"/>
    <property type="project" value="UniProtKB-UniRule"/>
</dbReference>
<dbReference type="GO" id="GO:0009060">
    <property type="term" value="P:aerobic respiration"/>
    <property type="evidence" value="ECO:0007669"/>
    <property type="project" value="UniProtKB-UniRule"/>
</dbReference>
<dbReference type="GO" id="GO:0009234">
    <property type="term" value="P:menaquinone biosynthetic process"/>
    <property type="evidence" value="ECO:0007669"/>
    <property type="project" value="UniProtKB-UniRule"/>
</dbReference>
<dbReference type="GO" id="GO:0032259">
    <property type="term" value="P:methylation"/>
    <property type="evidence" value="ECO:0007669"/>
    <property type="project" value="UniProtKB-KW"/>
</dbReference>
<dbReference type="CDD" id="cd02440">
    <property type="entry name" value="AdoMet_MTases"/>
    <property type="match status" value="1"/>
</dbReference>
<dbReference type="Gene3D" id="3.40.50.150">
    <property type="entry name" value="Vaccinia Virus protein VP39"/>
    <property type="match status" value="1"/>
</dbReference>
<dbReference type="HAMAP" id="MF_01813">
    <property type="entry name" value="MenG_UbiE_methyltr"/>
    <property type="match status" value="1"/>
</dbReference>
<dbReference type="InterPro" id="IPR029063">
    <property type="entry name" value="SAM-dependent_MTases_sf"/>
</dbReference>
<dbReference type="InterPro" id="IPR004033">
    <property type="entry name" value="UbiE/COQ5_MeTrFase"/>
</dbReference>
<dbReference type="InterPro" id="IPR023576">
    <property type="entry name" value="UbiE/COQ5_MeTrFase_CS"/>
</dbReference>
<dbReference type="NCBIfam" id="TIGR01934">
    <property type="entry name" value="MenG_MenH_UbiE"/>
    <property type="match status" value="1"/>
</dbReference>
<dbReference type="NCBIfam" id="NF001240">
    <property type="entry name" value="PRK00216.1-1"/>
    <property type="match status" value="1"/>
</dbReference>
<dbReference type="PANTHER" id="PTHR43591:SF24">
    <property type="entry name" value="2-METHOXY-6-POLYPRENYL-1,4-BENZOQUINOL METHYLASE, MITOCHONDRIAL"/>
    <property type="match status" value="1"/>
</dbReference>
<dbReference type="PANTHER" id="PTHR43591">
    <property type="entry name" value="METHYLTRANSFERASE"/>
    <property type="match status" value="1"/>
</dbReference>
<dbReference type="Pfam" id="PF01209">
    <property type="entry name" value="Ubie_methyltran"/>
    <property type="match status" value="1"/>
</dbReference>
<dbReference type="SUPFAM" id="SSF53335">
    <property type="entry name" value="S-adenosyl-L-methionine-dependent methyltransferases"/>
    <property type="match status" value="1"/>
</dbReference>
<dbReference type="PROSITE" id="PS51608">
    <property type="entry name" value="SAM_MT_UBIE"/>
    <property type="match status" value="1"/>
</dbReference>
<dbReference type="PROSITE" id="PS01183">
    <property type="entry name" value="UBIE_1"/>
    <property type="match status" value="1"/>
</dbReference>
<protein>
    <recommendedName>
        <fullName evidence="1">Ubiquinone/menaquinone biosynthesis C-methyltransferase UbiE</fullName>
        <ecNumber evidence="1">2.1.1.163</ecNumber>
        <ecNumber evidence="1">2.1.1.201</ecNumber>
    </recommendedName>
    <alternativeName>
        <fullName evidence="1">2-methoxy-6-polyprenyl-1,4-benzoquinol methylase</fullName>
    </alternativeName>
    <alternativeName>
        <fullName evidence="1">Demethylmenaquinone methyltransferase</fullName>
    </alternativeName>
</protein>
<evidence type="ECO:0000255" key="1">
    <source>
        <dbReference type="HAMAP-Rule" id="MF_01813"/>
    </source>
</evidence>
<feature type="chain" id="PRO_1000056237" description="Ubiquinone/menaquinone biosynthesis C-methyltransferase UbiE">
    <location>
        <begin position="1"/>
        <end position="243"/>
    </location>
</feature>
<feature type="binding site" evidence="1">
    <location>
        <position position="69"/>
    </location>
    <ligand>
        <name>S-adenosyl-L-methionine</name>
        <dbReference type="ChEBI" id="CHEBI:59789"/>
    </ligand>
</feature>
<feature type="binding site" evidence="1">
    <location>
        <position position="90"/>
    </location>
    <ligand>
        <name>S-adenosyl-L-methionine</name>
        <dbReference type="ChEBI" id="CHEBI:59789"/>
    </ligand>
</feature>
<feature type="binding site" evidence="1">
    <location>
        <begin position="116"/>
        <end position="117"/>
    </location>
    <ligand>
        <name>S-adenosyl-L-methionine</name>
        <dbReference type="ChEBI" id="CHEBI:59789"/>
    </ligand>
</feature>
<keyword id="KW-0474">Menaquinone biosynthesis</keyword>
<keyword id="KW-0489">Methyltransferase</keyword>
<keyword id="KW-1185">Reference proteome</keyword>
<keyword id="KW-0949">S-adenosyl-L-methionine</keyword>
<keyword id="KW-0808">Transferase</keyword>
<keyword id="KW-0831">Ubiquinone biosynthesis</keyword>
<comment type="function">
    <text evidence="1">Methyltransferase required for the conversion of demethylmenaquinol (DMKH2) to menaquinol (MKH2) and the conversion of 2-polyprenyl-6-methoxy-1,4-benzoquinol (DDMQH2) to 2-polyprenyl-3-methyl-6-methoxy-1,4-benzoquinol (DMQH2).</text>
</comment>
<comment type="catalytic activity">
    <reaction evidence="1">
        <text>a 2-demethylmenaquinol + S-adenosyl-L-methionine = a menaquinol + S-adenosyl-L-homocysteine + H(+)</text>
        <dbReference type="Rhea" id="RHEA:42640"/>
        <dbReference type="Rhea" id="RHEA-COMP:9539"/>
        <dbReference type="Rhea" id="RHEA-COMP:9563"/>
        <dbReference type="ChEBI" id="CHEBI:15378"/>
        <dbReference type="ChEBI" id="CHEBI:18151"/>
        <dbReference type="ChEBI" id="CHEBI:55437"/>
        <dbReference type="ChEBI" id="CHEBI:57856"/>
        <dbReference type="ChEBI" id="CHEBI:59789"/>
        <dbReference type="EC" id="2.1.1.163"/>
    </reaction>
</comment>
<comment type="catalytic activity">
    <reaction evidence="1">
        <text>a 2-methoxy-6-(all-trans-polyprenyl)benzene-1,4-diol + S-adenosyl-L-methionine = a 5-methoxy-2-methyl-3-(all-trans-polyprenyl)benzene-1,4-diol + S-adenosyl-L-homocysteine + H(+)</text>
        <dbReference type="Rhea" id="RHEA:28286"/>
        <dbReference type="Rhea" id="RHEA-COMP:10858"/>
        <dbReference type="Rhea" id="RHEA-COMP:10859"/>
        <dbReference type="ChEBI" id="CHEBI:15378"/>
        <dbReference type="ChEBI" id="CHEBI:57856"/>
        <dbReference type="ChEBI" id="CHEBI:59789"/>
        <dbReference type="ChEBI" id="CHEBI:84166"/>
        <dbReference type="ChEBI" id="CHEBI:84167"/>
        <dbReference type="EC" id="2.1.1.201"/>
    </reaction>
</comment>
<comment type="pathway">
    <text evidence="1">Quinol/quinone metabolism; menaquinone biosynthesis; menaquinol from 1,4-dihydroxy-2-naphthoate: step 2/2.</text>
</comment>
<comment type="pathway">
    <text evidence="1">Cofactor biosynthesis; ubiquinone biosynthesis.</text>
</comment>
<comment type="similarity">
    <text evidence="1">Belongs to the class I-like SAM-binding methyltransferase superfamily. MenG/UbiE family.</text>
</comment>
<proteinExistence type="inferred from homology"/>